<proteinExistence type="evidence at transcript level"/>
<name>U89B2_STERE</name>
<organism>
    <name type="scientific">Stevia rebaudiana</name>
    <name type="common">Stevia</name>
    <name type="synonym">Eupatorium rebaudianum</name>
    <dbReference type="NCBI Taxonomy" id="55670"/>
    <lineage>
        <taxon>Eukaryota</taxon>
        <taxon>Viridiplantae</taxon>
        <taxon>Streptophyta</taxon>
        <taxon>Embryophyta</taxon>
        <taxon>Tracheophyta</taxon>
        <taxon>Spermatophyta</taxon>
        <taxon>Magnoliopsida</taxon>
        <taxon>eudicotyledons</taxon>
        <taxon>Gunneridae</taxon>
        <taxon>Pentapetalae</taxon>
        <taxon>asterids</taxon>
        <taxon>campanulids</taxon>
        <taxon>Asterales</taxon>
        <taxon>Asteraceae</taxon>
        <taxon>Asteroideae</taxon>
        <taxon>Heliantheae alliance</taxon>
        <taxon>Eupatorieae</taxon>
        <taxon>Stevia</taxon>
    </lineage>
</organism>
<feature type="chain" id="PRO_0000434472" description="UDP-glycosyltransferase 89B2">
    <location>
        <begin position="1"/>
        <end position="468"/>
    </location>
</feature>
<feature type="binding site" evidence="2">
    <location>
        <position position="287"/>
    </location>
    <ligand>
        <name>UDP-alpha-D-glucose</name>
        <dbReference type="ChEBI" id="CHEBI:58885"/>
    </ligand>
</feature>
<feature type="binding site" evidence="2">
    <location>
        <begin position="347"/>
        <end position="348"/>
    </location>
    <ligand>
        <name>UDP-alpha-D-glucose</name>
        <dbReference type="ChEBI" id="CHEBI:58885"/>
    </ligand>
</feature>
<feature type="binding site" evidence="2">
    <location>
        <begin position="365"/>
        <end position="373"/>
    </location>
    <ligand>
        <name>UDP-alpha-D-glucose</name>
        <dbReference type="ChEBI" id="CHEBI:58885"/>
    </ligand>
</feature>
<feature type="binding site" evidence="2">
    <location>
        <begin position="387"/>
        <end position="390"/>
    </location>
    <ligand>
        <name>UDP-alpha-D-glucose</name>
        <dbReference type="ChEBI" id="CHEBI:58885"/>
    </ligand>
</feature>
<dbReference type="EC" id="2.4.1.-" evidence="4"/>
<dbReference type="EMBL" id="AY345983">
    <property type="protein sequence ID" value="AAR06921.1"/>
    <property type="molecule type" value="mRNA"/>
</dbReference>
<dbReference type="SMR" id="Q6VAA5"/>
<dbReference type="CAZy" id="GT1">
    <property type="family name" value="Glycosyltransferase Family 1"/>
</dbReference>
<dbReference type="GO" id="GO:0035251">
    <property type="term" value="F:UDP-glucosyltransferase activity"/>
    <property type="evidence" value="ECO:0007669"/>
    <property type="project" value="TreeGrafter"/>
</dbReference>
<dbReference type="CDD" id="cd03784">
    <property type="entry name" value="GT1_Gtf-like"/>
    <property type="match status" value="1"/>
</dbReference>
<dbReference type="FunFam" id="3.40.50.2000:FF:000064">
    <property type="entry name" value="Glycosyltransferase"/>
    <property type="match status" value="1"/>
</dbReference>
<dbReference type="FunFam" id="3.40.50.2000:FF:000143">
    <property type="entry name" value="UDP-glycosyltransferase 89B1"/>
    <property type="match status" value="1"/>
</dbReference>
<dbReference type="Gene3D" id="3.40.50.2000">
    <property type="entry name" value="Glycogen Phosphorylase B"/>
    <property type="match status" value="2"/>
</dbReference>
<dbReference type="InterPro" id="IPR002213">
    <property type="entry name" value="UDP_glucos_trans"/>
</dbReference>
<dbReference type="PANTHER" id="PTHR48047:SF8">
    <property type="entry name" value="FLAVONOL 3-O-GLUCOSYLTRANSFERASE UGT89B1"/>
    <property type="match status" value="1"/>
</dbReference>
<dbReference type="PANTHER" id="PTHR48047">
    <property type="entry name" value="GLYCOSYLTRANSFERASE"/>
    <property type="match status" value="1"/>
</dbReference>
<dbReference type="Pfam" id="PF00201">
    <property type="entry name" value="UDPGT"/>
    <property type="match status" value="1"/>
</dbReference>
<dbReference type="SUPFAM" id="SSF53756">
    <property type="entry name" value="UDP-Glycosyltransferase/glycogen phosphorylase"/>
    <property type="match status" value="1"/>
</dbReference>
<keyword id="KW-0808">Transferase</keyword>
<gene>
    <name evidence="3" type="primary">UGT89B2</name>
</gene>
<evidence type="ECO:0000250" key="1">
    <source>
        <dbReference type="UniProtKB" id="Q6VAA6"/>
    </source>
</evidence>
<evidence type="ECO:0000250" key="2">
    <source>
        <dbReference type="UniProtKB" id="Q9M156"/>
    </source>
</evidence>
<evidence type="ECO:0000303" key="3">
    <source>
    </source>
</evidence>
<evidence type="ECO:0000305" key="4"/>
<accession>Q6VAA5</accession>
<comment type="function">
    <text evidence="1">May glycosylate diterpenes or flavonols in leaves.</text>
</comment>
<comment type="similarity">
    <text evidence="4">Belongs to the UDP-glycosyltransferase family.</text>
</comment>
<protein>
    <recommendedName>
        <fullName evidence="3">UDP-glycosyltransferase 89B2</fullName>
        <ecNumber evidence="4">2.4.1.-</ecNumber>
    </recommendedName>
</protein>
<sequence>MPISDINAGSHILVFPYPAQGHMLTLLDLTHQLAIRNLTITILVTPKNLPTISPLLAAHPTTVSALLLPLPPHPAIPSGIENVKDLPNDAFKAMMVALGDLYNPLRDWFRNQPNPPVAIISDFFLGWTHHLAVELGIRRYTFSPSGALALSVIFSLWRYQPKRIDVENEKEAIKFPKIPNSPEYPWWQLSPIYRSYVEGDPDSEFIKDGFLADIASWGIVINSFTELEQVYVDHLKHELGHDQVFAVGPLLPPGDKTSGRGGSSSNDVLSWLDTCADRTVVYVCFGSQMVLTNGQMEVVALGLEKSRVKFVWSVKEPTVGHEAANYGRVPPGFEDRVSGRGLVIRGWVPQVAILSHDSVGVFLTHCGWNSVMEAVAAEVLMLTWPMSADQFSNATLLHELKVGIKVCEGSNIVPNSDELAELFSKSLSDETRLERKRVKEFAKSAKEAVGPKGSSVGELERLVDNLSL</sequence>
<reference key="1">
    <citation type="journal article" date="2005" name="Plant J.">
        <title>Functional genomics uncovers three glucosyltransferases involved in the synthesis of the major sweet glucosides of Stevia rebaudiana.</title>
        <authorList>
            <person name="Richman A."/>
            <person name="Swanson A."/>
            <person name="Humphrey T."/>
            <person name="Chapman R."/>
            <person name="McGarvey B."/>
            <person name="Pocs R."/>
            <person name="Brandle J."/>
        </authorList>
    </citation>
    <scope>NUCLEOTIDE SEQUENCE [MRNA]</scope>
    <source>
        <tissue>Leaf</tissue>
    </source>
</reference>